<gene>
    <name evidence="1" type="primary">dcd</name>
    <name type="ordered locus">azo3200</name>
</gene>
<name>DCD_AZOSB</name>
<accession>A1KAG0</accession>
<sequence>MSIKSDKWIRRMAEQQGMIAPFAPELVRSNEGGKIVSYGTSSYGYDVRCANEFKIFTNINSTIVDPKDFDARNFVDFVGDVCIIPPNSFALARTVEFFRIPRNVLTVCLGKSTYARCGIIVNVTPLEPEWEGHVTLEFSNTTPLPAKIYANEGVAQMLFFESDEECETSYKDRGGKYFGQTGVTLPKI</sequence>
<reference key="1">
    <citation type="journal article" date="2006" name="Nat. Biotechnol.">
        <title>Complete genome of the mutualistic, N2-fixing grass endophyte Azoarcus sp. strain BH72.</title>
        <authorList>
            <person name="Krause A."/>
            <person name="Ramakumar A."/>
            <person name="Bartels D."/>
            <person name="Battistoni F."/>
            <person name="Bekel T."/>
            <person name="Boch J."/>
            <person name="Boehm M."/>
            <person name="Friedrich F."/>
            <person name="Hurek T."/>
            <person name="Krause L."/>
            <person name="Linke B."/>
            <person name="McHardy A.C."/>
            <person name="Sarkar A."/>
            <person name="Schneiker S."/>
            <person name="Syed A.A."/>
            <person name="Thauer R."/>
            <person name="Vorhoelter F.-J."/>
            <person name="Weidner S."/>
            <person name="Puehler A."/>
            <person name="Reinhold-Hurek B."/>
            <person name="Kaiser O."/>
            <person name="Goesmann A."/>
        </authorList>
    </citation>
    <scope>NUCLEOTIDE SEQUENCE [LARGE SCALE GENOMIC DNA]</scope>
    <source>
        <strain>BH72</strain>
    </source>
</reference>
<organism>
    <name type="scientific">Azoarcus sp. (strain BH72)</name>
    <dbReference type="NCBI Taxonomy" id="418699"/>
    <lineage>
        <taxon>Bacteria</taxon>
        <taxon>Pseudomonadati</taxon>
        <taxon>Pseudomonadota</taxon>
        <taxon>Betaproteobacteria</taxon>
        <taxon>Rhodocyclales</taxon>
        <taxon>Zoogloeaceae</taxon>
        <taxon>Azoarcus</taxon>
    </lineage>
</organism>
<proteinExistence type="inferred from homology"/>
<dbReference type="EC" id="3.5.4.13" evidence="1"/>
<dbReference type="EMBL" id="AM406670">
    <property type="protein sequence ID" value="CAL95816.1"/>
    <property type="molecule type" value="Genomic_DNA"/>
</dbReference>
<dbReference type="RefSeq" id="WP_011766924.1">
    <property type="nucleotide sequence ID" value="NC_008702.1"/>
</dbReference>
<dbReference type="SMR" id="A1KAG0"/>
<dbReference type="STRING" id="62928.azo3200"/>
<dbReference type="KEGG" id="aoa:dqs_3337"/>
<dbReference type="KEGG" id="azo:azo3200"/>
<dbReference type="eggNOG" id="COG0717">
    <property type="taxonomic scope" value="Bacteria"/>
</dbReference>
<dbReference type="HOGENOM" id="CLU_087476_4_0_4"/>
<dbReference type="OrthoDB" id="9780956at2"/>
<dbReference type="UniPathway" id="UPA00610">
    <property type="reaction ID" value="UER00665"/>
</dbReference>
<dbReference type="Proteomes" id="UP000002588">
    <property type="component" value="Chromosome"/>
</dbReference>
<dbReference type="GO" id="GO:0008829">
    <property type="term" value="F:dCTP deaminase activity"/>
    <property type="evidence" value="ECO:0007669"/>
    <property type="project" value="UniProtKB-UniRule"/>
</dbReference>
<dbReference type="GO" id="GO:0000166">
    <property type="term" value="F:nucleotide binding"/>
    <property type="evidence" value="ECO:0007669"/>
    <property type="project" value="UniProtKB-KW"/>
</dbReference>
<dbReference type="GO" id="GO:0006226">
    <property type="term" value="P:dUMP biosynthetic process"/>
    <property type="evidence" value="ECO:0007669"/>
    <property type="project" value="UniProtKB-UniPathway"/>
</dbReference>
<dbReference type="GO" id="GO:0006229">
    <property type="term" value="P:dUTP biosynthetic process"/>
    <property type="evidence" value="ECO:0007669"/>
    <property type="project" value="UniProtKB-UniRule"/>
</dbReference>
<dbReference type="GO" id="GO:0015949">
    <property type="term" value="P:nucleobase-containing small molecule interconversion"/>
    <property type="evidence" value="ECO:0007669"/>
    <property type="project" value="TreeGrafter"/>
</dbReference>
<dbReference type="CDD" id="cd07557">
    <property type="entry name" value="trimeric_dUTPase"/>
    <property type="match status" value="1"/>
</dbReference>
<dbReference type="FunFam" id="2.70.40.10:FF:000001">
    <property type="entry name" value="dCTP deaminase"/>
    <property type="match status" value="1"/>
</dbReference>
<dbReference type="Gene3D" id="2.70.40.10">
    <property type="match status" value="1"/>
</dbReference>
<dbReference type="HAMAP" id="MF_00146">
    <property type="entry name" value="dCTP_deaminase"/>
    <property type="match status" value="1"/>
</dbReference>
<dbReference type="InterPro" id="IPR011962">
    <property type="entry name" value="dCTP_deaminase"/>
</dbReference>
<dbReference type="InterPro" id="IPR036157">
    <property type="entry name" value="dUTPase-like_sf"/>
</dbReference>
<dbReference type="InterPro" id="IPR033704">
    <property type="entry name" value="dUTPase_trimeric"/>
</dbReference>
<dbReference type="NCBIfam" id="TIGR02274">
    <property type="entry name" value="dCTP_deam"/>
    <property type="match status" value="1"/>
</dbReference>
<dbReference type="PANTHER" id="PTHR42680">
    <property type="entry name" value="DCTP DEAMINASE"/>
    <property type="match status" value="1"/>
</dbReference>
<dbReference type="PANTHER" id="PTHR42680:SF3">
    <property type="entry name" value="DCTP DEAMINASE"/>
    <property type="match status" value="1"/>
</dbReference>
<dbReference type="Pfam" id="PF22769">
    <property type="entry name" value="DCD"/>
    <property type="match status" value="1"/>
</dbReference>
<dbReference type="SUPFAM" id="SSF51283">
    <property type="entry name" value="dUTPase-like"/>
    <property type="match status" value="1"/>
</dbReference>
<protein>
    <recommendedName>
        <fullName evidence="1">dCTP deaminase</fullName>
        <ecNumber evidence="1">3.5.4.13</ecNumber>
    </recommendedName>
    <alternativeName>
        <fullName evidence="1">Deoxycytidine triphosphate deaminase</fullName>
    </alternativeName>
</protein>
<comment type="function">
    <text evidence="1">Catalyzes the deamination of dCTP to dUTP.</text>
</comment>
<comment type="catalytic activity">
    <reaction evidence="1">
        <text>dCTP + H2O + H(+) = dUTP + NH4(+)</text>
        <dbReference type="Rhea" id="RHEA:22680"/>
        <dbReference type="ChEBI" id="CHEBI:15377"/>
        <dbReference type="ChEBI" id="CHEBI:15378"/>
        <dbReference type="ChEBI" id="CHEBI:28938"/>
        <dbReference type="ChEBI" id="CHEBI:61481"/>
        <dbReference type="ChEBI" id="CHEBI:61555"/>
        <dbReference type="EC" id="3.5.4.13"/>
    </reaction>
</comment>
<comment type="pathway">
    <text evidence="1">Pyrimidine metabolism; dUMP biosynthesis; dUMP from dCTP (dUTP route): step 1/2.</text>
</comment>
<comment type="subunit">
    <text evidence="1">Homotrimer.</text>
</comment>
<comment type="similarity">
    <text evidence="1">Belongs to the dCTP deaminase family.</text>
</comment>
<evidence type="ECO:0000255" key="1">
    <source>
        <dbReference type="HAMAP-Rule" id="MF_00146"/>
    </source>
</evidence>
<feature type="chain" id="PRO_1000009679" description="dCTP deaminase">
    <location>
        <begin position="1"/>
        <end position="188"/>
    </location>
</feature>
<feature type="active site" description="Proton donor/acceptor" evidence="1">
    <location>
        <position position="137"/>
    </location>
</feature>
<feature type="binding site" evidence="1">
    <location>
        <begin position="111"/>
        <end position="116"/>
    </location>
    <ligand>
        <name>dCTP</name>
        <dbReference type="ChEBI" id="CHEBI:61481"/>
    </ligand>
</feature>
<feature type="binding site" evidence="1">
    <location>
        <begin position="135"/>
        <end position="137"/>
    </location>
    <ligand>
        <name>dCTP</name>
        <dbReference type="ChEBI" id="CHEBI:61481"/>
    </ligand>
</feature>
<feature type="binding site" evidence="1">
    <location>
        <position position="156"/>
    </location>
    <ligand>
        <name>dCTP</name>
        <dbReference type="ChEBI" id="CHEBI:61481"/>
    </ligand>
</feature>
<feature type="binding site" evidence="1">
    <location>
        <position position="170"/>
    </location>
    <ligand>
        <name>dCTP</name>
        <dbReference type="ChEBI" id="CHEBI:61481"/>
    </ligand>
</feature>
<feature type="binding site" evidence="1">
    <location>
        <position position="180"/>
    </location>
    <ligand>
        <name>dCTP</name>
        <dbReference type="ChEBI" id="CHEBI:61481"/>
    </ligand>
</feature>
<keyword id="KW-0378">Hydrolase</keyword>
<keyword id="KW-0546">Nucleotide metabolism</keyword>
<keyword id="KW-0547">Nucleotide-binding</keyword>
<keyword id="KW-1185">Reference proteome</keyword>